<proteinExistence type="inferred from homology"/>
<reference key="1">
    <citation type="journal article" date="2008" name="J. Bacteriol.">
        <title>Comparative genome sequence analysis of multidrug-resistant Acinetobacter baumannii.</title>
        <authorList>
            <person name="Adams M.D."/>
            <person name="Goglin K."/>
            <person name="Molyneaux N."/>
            <person name="Hujer K.M."/>
            <person name="Lavender H."/>
            <person name="Jamison J.J."/>
            <person name="MacDonald I.J."/>
            <person name="Martin K.M."/>
            <person name="Russo T."/>
            <person name="Campagnari A.A."/>
            <person name="Hujer A.M."/>
            <person name="Bonomo R.A."/>
            <person name="Gill S.R."/>
        </authorList>
    </citation>
    <scope>NUCLEOTIDE SEQUENCE [LARGE SCALE GENOMIC DNA]</scope>
    <source>
        <strain>AB0057</strain>
    </source>
</reference>
<feature type="chain" id="PRO_1000195189" description="Holliday junction branch migration complex subunit RuvB">
    <location>
        <begin position="1"/>
        <end position="334"/>
    </location>
</feature>
<feature type="region of interest" description="Large ATPase domain (RuvB-L)" evidence="1">
    <location>
        <begin position="1"/>
        <end position="181"/>
    </location>
</feature>
<feature type="region of interest" description="Small ATPAse domain (RuvB-S)" evidence="1">
    <location>
        <begin position="182"/>
        <end position="252"/>
    </location>
</feature>
<feature type="region of interest" description="Head domain (RuvB-H)" evidence="1">
    <location>
        <begin position="255"/>
        <end position="334"/>
    </location>
</feature>
<feature type="binding site" evidence="1">
    <location>
        <position position="20"/>
    </location>
    <ligand>
        <name>ATP</name>
        <dbReference type="ChEBI" id="CHEBI:30616"/>
    </ligand>
</feature>
<feature type="binding site" evidence="1">
    <location>
        <position position="21"/>
    </location>
    <ligand>
        <name>ATP</name>
        <dbReference type="ChEBI" id="CHEBI:30616"/>
    </ligand>
</feature>
<feature type="binding site" evidence="1">
    <location>
        <position position="62"/>
    </location>
    <ligand>
        <name>ATP</name>
        <dbReference type="ChEBI" id="CHEBI:30616"/>
    </ligand>
</feature>
<feature type="binding site" evidence="1">
    <location>
        <position position="65"/>
    </location>
    <ligand>
        <name>ATP</name>
        <dbReference type="ChEBI" id="CHEBI:30616"/>
    </ligand>
</feature>
<feature type="binding site" evidence="1">
    <location>
        <position position="66"/>
    </location>
    <ligand>
        <name>ATP</name>
        <dbReference type="ChEBI" id="CHEBI:30616"/>
    </ligand>
</feature>
<feature type="binding site" evidence="1">
    <location>
        <position position="66"/>
    </location>
    <ligand>
        <name>Mg(2+)</name>
        <dbReference type="ChEBI" id="CHEBI:18420"/>
    </ligand>
</feature>
<feature type="binding site" evidence="1">
    <location>
        <position position="67"/>
    </location>
    <ligand>
        <name>ATP</name>
        <dbReference type="ChEBI" id="CHEBI:30616"/>
    </ligand>
</feature>
<feature type="binding site" evidence="1">
    <location>
        <begin position="128"/>
        <end position="130"/>
    </location>
    <ligand>
        <name>ATP</name>
        <dbReference type="ChEBI" id="CHEBI:30616"/>
    </ligand>
</feature>
<feature type="binding site" evidence="1">
    <location>
        <position position="171"/>
    </location>
    <ligand>
        <name>ATP</name>
        <dbReference type="ChEBI" id="CHEBI:30616"/>
    </ligand>
</feature>
<feature type="binding site" evidence="1">
    <location>
        <position position="181"/>
    </location>
    <ligand>
        <name>ATP</name>
        <dbReference type="ChEBI" id="CHEBI:30616"/>
    </ligand>
</feature>
<feature type="binding site" evidence="1">
    <location>
        <position position="218"/>
    </location>
    <ligand>
        <name>ATP</name>
        <dbReference type="ChEBI" id="CHEBI:30616"/>
    </ligand>
</feature>
<feature type="binding site" evidence="1">
    <location>
        <position position="310"/>
    </location>
    <ligand>
        <name>DNA</name>
        <dbReference type="ChEBI" id="CHEBI:16991"/>
    </ligand>
</feature>
<feature type="binding site" evidence="1">
    <location>
        <position position="315"/>
    </location>
    <ligand>
        <name>DNA</name>
        <dbReference type="ChEBI" id="CHEBI:16991"/>
    </ligand>
</feature>
<organism>
    <name type="scientific">Acinetobacter baumannii (strain AB0057)</name>
    <dbReference type="NCBI Taxonomy" id="480119"/>
    <lineage>
        <taxon>Bacteria</taxon>
        <taxon>Pseudomonadati</taxon>
        <taxon>Pseudomonadota</taxon>
        <taxon>Gammaproteobacteria</taxon>
        <taxon>Moraxellales</taxon>
        <taxon>Moraxellaceae</taxon>
        <taxon>Acinetobacter</taxon>
        <taxon>Acinetobacter calcoaceticus/baumannii complex</taxon>
    </lineage>
</organism>
<sequence length="334" mass="36815">MQDRLISGTEKPEDHFDRAIRPTSLADYIGQPVVREQMEIFIGAARGRGEALDHTLIFGPPGLGKTTLANIIAREMGGNLKSTSGPVLERAGDLAAMLTNLEEGDVLFIDEIHRLSPVIEEILYPAMEDYQLDIMIGEGPAARSIKLDLPPFTLVAATTRAGLLTSPLRDRFGIVQRLEFYSVEDLTHIVSRSANLMDVPITVEGAEEVARRSRGTPRIANRLLRRVRDYAQVKGTGEVNHEMAQRALDMLNVDKAGLDTLDRRYLSMLLERFDGGPAGVEALAAAMAEDSGTLEDVIEPYLIQQGYVMRTARGRIATNQSYLQFGMTPPEPKN</sequence>
<keyword id="KW-0067">ATP-binding</keyword>
<keyword id="KW-0963">Cytoplasm</keyword>
<keyword id="KW-0227">DNA damage</keyword>
<keyword id="KW-0233">DNA recombination</keyword>
<keyword id="KW-0234">DNA repair</keyword>
<keyword id="KW-0238">DNA-binding</keyword>
<keyword id="KW-0378">Hydrolase</keyword>
<keyword id="KW-0547">Nucleotide-binding</keyword>
<accession>B7I5A9</accession>
<gene>
    <name evidence="1" type="primary">ruvB</name>
    <name type="ordered locus">AB57_2995</name>
</gene>
<comment type="function">
    <text evidence="1">The RuvA-RuvB-RuvC complex processes Holliday junction (HJ) DNA during genetic recombination and DNA repair, while the RuvA-RuvB complex plays an important role in the rescue of blocked DNA replication forks via replication fork reversal (RFR). RuvA specifically binds to HJ cruciform DNA, conferring on it an open structure. The RuvB hexamer acts as an ATP-dependent pump, pulling dsDNA into and through the RuvAB complex. RuvB forms 2 homohexamers on either side of HJ DNA bound by 1 or 2 RuvA tetramers; 4 subunits per hexamer contact DNA at a time. Coordinated motions by a converter formed by DNA-disengaged RuvB subunits stimulates ATP hydrolysis and nucleotide exchange. Immobilization of the converter enables RuvB to convert the ATP-contained energy into a lever motion, pulling 2 nucleotides of DNA out of the RuvA tetramer per ATP hydrolyzed, thus driving DNA branch migration. The RuvB motors rotate together with the DNA substrate, which together with the progressing nucleotide cycle form the mechanistic basis for DNA recombination by continuous HJ branch migration. Branch migration allows RuvC to scan DNA until it finds its consensus sequence, where it cleaves and resolves cruciform DNA.</text>
</comment>
<comment type="catalytic activity">
    <reaction evidence="1">
        <text>ATP + H2O = ADP + phosphate + H(+)</text>
        <dbReference type="Rhea" id="RHEA:13065"/>
        <dbReference type="ChEBI" id="CHEBI:15377"/>
        <dbReference type="ChEBI" id="CHEBI:15378"/>
        <dbReference type="ChEBI" id="CHEBI:30616"/>
        <dbReference type="ChEBI" id="CHEBI:43474"/>
        <dbReference type="ChEBI" id="CHEBI:456216"/>
    </reaction>
</comment>
<comment type="subunit">
    <text evidence="1">Homohexamer. Forms an RuvA(8)-RuvB(12)-Holliday junction (HJ) complex. HJ DNA is sandwiched between 2 RuvA tetramers; dsDNA enters through RuvA and exits via RuvB. An RuvB hexamer assembles on each DNA strand where it exits the tetramer. Each RuvB hexamer is contacted by two RuvA subunits (via domain III) on 2 adjacent RuvB subunits; this complex drives branch migration. In the full resolvosome a probable DNA-RuvA(4)-RuvB(12)-RuvC(2) complex forms which resolves the HJ.</text>
</comment>
<comment type="subcellular location">
    <subcellularLocation>
        <location evidence="1">Cytoplasm</location>
    </subcellularLocation>
</comment>
<comment type="domain">
    <text evidence="1">Has 3 domains, the large (RuvB-L) and small ATPase (RuvB-S) domains and the C-terminal head (RuvB-H) domain. The head domain binds DNA, while the ATPase domains jointly bind ATP, ADP or are empty depending on the state of the subunit in the translocation cycle. During a single DNA translocation step the structure of each domain remains the same, but their relative positions change.</text>
</comment>
<comment type="similarity">
    <text evidence="1">Belongs to the RuvB family.</text>
</comment>
<dbReference type="EC" id="3.6.4.-" evidence="1"/>
<dbReference type="EMBL" id="CP001182">
    <property type="protein sequence ID" value="ACJ42336.1"/>
    <property type="molecule type" value="Genomic_DNA"/>
</dbReference>
<dbReference type="RefSeq" id="WP_001154002.1">
    <property type="nucleotide sequence ID" value="NC_011586.2"/>
</dbReference>
<dbReference type="SMR" id="B7I5A9"/>
<dbReference type="GeneID" id="92894861"/>
<dbReference type="KEGG" id="abn:AB57_2995"/>
<dbReference type="HOGENOM" id="CLU_055599_1_0_6"/>
<dbReference type="Proteomes" id="UP000007094">
    <property type="component" value="Chromosome"/>
</dbReference>
<dbReference type="GO" id="GO:0005737">
    <property type="term" value="C:cytoplasm"/>
    <property type="evidence" value="ECO:0007669"/>
    <property type="project" value="UniProtKB-SubCell"/>
</dbReference>
<dbReference type="GO" id="GO:0048476">
    <property type="term" value="C:Holliday junction resolvase complex"/>
    <property type="evidence" value="ECO:0007669"/>
    <property type="project" value="UniProtKB-UniRule"/>
</dbReference>
<dbReference type="GO" id="GO:0005524">
    <property type="term" value="F:ATP binding"/>
    <property type="evidence" value="ECO:0007669"/>
    <property type="project" value="UniProtKB-UniRule"/>
</dbReference>
<dbReference type="GO" id="GO:0016887">
    <property type="term" value="F:ATP hydrolysis activity"/>
    <property type="evidence" value="ECO:0007669"/>
    <property type="project" value="InterPro"/>
</dbReference>
<dbReference type="GO" id="GO:0000400">
    <property type="term" value="F:four-way junction DNA binding"/>
    <property type="evidence" value="ECO:0007669"/>
    <property type="project" value="UniProtKB-UniRule"/>
</dbReference>
<dbReference type="GO" id="GO:0009378">
    <property type="term" value="F:four-way junction helicase activity"/>
    <property type="evidence" value="ECO:0007669"/>
    <property type="project" value="InterPro"/>
</dbReference>
<dbReference type="GO" id="GO:0006310">
    <property type="term" value="P:DNA recombination"/>
    <property type="evidence" value="ECO:0007669"/>
    <property type="project" value="UniProtKB-UniRule"/>
</dbReference>
<dbReference type="GO" id="GO:0006281">
    <property type="term" value="P:DNA repair"/>
    <property type="evidence" value="ECO:0007669"/>
    <property type="project" value="UniProtKB-UniRule"/>
</dbReference>
<dbReference type="CDD" id="cd00009">
    <property type="entry name" value="AAA"/>
    <property type="match status" value="1"/>
</dbReference>
<dbReference type="FunFam" id="1.10.8.60:FF:000023">
    <property type="entry name" value="Holliday junction ATP-dependent DNA helicase RuvB"/>
    <property type="match status" value="1"/>
</dbReference>
<dbReference type="FunFam" id="3.40.50.300:FF:000073">
    <property type="entry name" value="Holliday junction ATP-dependent DNA helicase RuvB"/>
    <property type="match status" value="1"/>
</dbReference>
<dbReference type="Gene3D" id="1.10.8.60">
    <property type="match status" value="1"/>
</dbReference>
<dbReference type="Gene3D" id="3.40.50.300">
    <property type="entry name" value="P-loop containing nucleotide triphosphate hydrolases"/>
    <property type="match status" value="1"/>
</dbReference>
<dbReference type="Gene3D" id="1.10.10.10">
    <property type="entry name" value="Winged helix-like DNA-binding domain superfamily/Winged helix DNA-binding domain"/>
    <property type="match status" value="1"/>
</dbReference>
<dbReference type="HAMAP" id="MF_00016">
    <property type="entry name" value="DNA_HJ_migration_RuvB"/>
    <property type="match status" value="1"/>
</dbReference>
<dbReference type="InterPro" id="IPR003593">
    <property type="entry name" value="AAA+_ATPase"/>
</dbReference>
<dbReference type="InterPro" id="IPR041445">
    <property type="entry name" value="AAA_lid_4"/>
</dbReference>
<dbReference type="InterPro" id="IPR004605">
    <property type="entry name" value="DNA_helicase_Holl-junc_RuvB"/>
</dbReference>
<dbReference type="InterPro" id="IPR027417">
    <property type="entry name" value="P-loop_NTPase"/>
</dbReference>
<dbReference type="InterPro" id="IPR008824">
    <property type="entry name" value="RuvB-like_N"/>
</dbReference>
<dbReference type="InterPro" id="IPR008823">
    <property type="entry name" value="RuvB_C"/>
</dbReference>
<dbReference type="InterPro" id="IPR036388">
    <property type="entry name" value="WH-like_DNA-bd_sf"/>
</dbReference>
<dbReference type="InterPro" id="IPR036390">
    <property type="entry name" value="WH_DNA-bd_sf"/>
</dbReference>
<dbReference type="NCBIfam" id="NF000868">
    <property type="entry name" value="PRK00080.1"/>
    <property type="match status" value="1"/>
</dbReference>
<dbReference type="NCBIfam" id="TIGR00635">
    <property type="entry name" value="ruvB"/>
    <property type="match status" value="1"/>
</dbReference>
<dbReference type="PANTHER" id="PTHR42848">
    <property type="match status" value="1"/>
</dbReference>
<dbReference type="PANTHER" id="PTHR42848:SF1">
    <property type="entry name" value="HOLLIDAY JUNCTION BRANCH MIGRATION COMPLEX SUBUNIT RUVB"/>
    <property type="match status" value="1"/>
</dbReference>
<dbReference type="Pfam" id="PF17864">
    <property type="entry name" value="AAA_lid_4"/>
    <property type="match status" value="1"/>
</dbReference>
<dbReference type="Pfam" id="PF05491">
    <property type="entry name" value="RuvB_C"/>
    <property type="match status" value="1"/>
</dbReference>
<dbReference type="Pfam" id="PF05496">
    <property type="entry name" value="RuvB_N"/>
    <property type="match status" value="1"/>
</dbReference>
<dbReference type="SMART" id="SM00382">
    <property type="entry name" value="AAA"/>
    <property type="match status" value="1"/>
</dbReference>
<dbReference type="SUPFAM" id="SSF52540">
    <property type="entry name" value="P-loop containing nucleoside triphosphate hydrolases"/>
    <property type="match status" value="1"/>
</dbReference>
<dbReference type="SUPFAM" id="SSF46785">
    <property type="entry name" value="Winged helix' DNA-binding domain"/>
    <property type="match status" value="1"/>
</dbReference>
<name>RUVB_ACIB5</name>
<evidence type="ECO:0000255" key="1">
    <source>
        <dbReference type="HAMAP-Rule" id="MF_00016"/>
    </source>
</evidence>
<protein>
    <recommendedName>
        <fullName evidence="1">Holliday junction branch migration complex subunit RuvB</fullName>
        <ecNumber evidence="1">3.6.4.-</ecNumber>
    </recommendedName>
</protein>